<dbReference type="EC" id="4.1.2.13"/>
<dbReference type="EMBL" id="M68914">
    <property type="protein sequence ID" value="AAA26157.1"/>
    <property type="molecule type" value="Genomic_DNA"/>
</dbReference>
<dbReference type="PIR" id="D41080">
    <property type="entry name" value="D41080"/>
</dbReference>
<dbReference type="SMR" id="P29271"/>
<dbReference type="UniPathway" id="UPA00109">
    <property type="reaction ID" value="UER00183"/>
</dbReference>
<dbReference type="UniPathway" id="UPA00116"/>
<dbReference type="GO" id="GO:0004332">
    <property type="term" value="F:fructose-bisphosphate aldolase activity"/>
    <property type="evidence" value="ECO:0007669"/>
    <property type="project" value="UniProtKB-EC"/>
</dbReference>
<dbReference type="GO" id="GO:0008270">
    <property type="term" value="F:zinc ion binding"/>
    <property type="evidence" value="ECO:0007669"/>
    <property type="project" value="InterPro"/>
</dbReference>
<dbReference type="GO" id="GO:0006096">
    <property type="term" value="P:glycolytic process"/>
    <property type="evidence" value="ECO:0007669"/>
    <property type="project" value="UniProtKB-UniPathway"/>
</dbReference>
<dbReference type="GO" id="GO:0019253">
    <property type="term" value="P:reductive pentose-phosphate cycle"/>
    <property type="evidence" value="ECO:0007669"/>
    <property type="project" value="UniProtKB-UniPathway"/>
</dbReference>
<dbReference type="CDD" id="cd00947">
    <property type="entry name" value="TBP_aldolase_IIB"/>
    <property type="match status" value="1"/>
</dbReference>
<dbReference type="FunFam" id="3.20.20.70:FF:000111">
    <property type="entry name" value="Fructose-1,6-bisphosphate aldolase"/>
    <property type="match status" value="1"/>
</dbReference>
<dbReference type="Gene3D" id="3.20.20.70">
    <property type="entry name" value="Aldolase class I"/>
    <property type="match status" value="1"/>
</dbReference>
<dbReference type="InterPro" id="IPR013785">
    <property type="entry name" value="Aldolase_TIM"/>
</dbReference>
<dbReference type="InterPro" id="IPR050246">
    <property type="entry name" value="Class_II_FBP_aldolase"/>
</dbReference>
<dbReference type="InterPro" id="IPR000771">
    <property type="entry name" value="FBA_II"/>
</dbReference>
<dbReference type="InterPro" id="IPR006412">
    <property type="entry name" value="Fruct_bisP_Calv"/>
</dbReference>
<dbReference type="NCBIfam" id="TIGR00167">
    <property type="entry name" value="cbbA"/>
    <property type="match status" value="1"/>
</dbReference>
<dbReference type="NCBIfam" id="TIGR01521">
    <property type="entry name" value="FruBisAldo_II_B"/>
    <property type="match status" value="1"/>
</dbReference>
<dbReference type="PANTHER" id="PTHR30304">
    <property type="entry name" value="D-TAGATOSE-1,6-BISPHOSPHATE ALDOLASE"/>
    <property type="match status" value="1"/>
</dbReference>
<dbReference type="PANTHER" id="PTHR30304:SF0">
    <property type="entry name" value="D-TAGATOSE-1,6-BISPHOSPHATE ALDOLASE SUBUNIT GATY-RELATED"/>
    <property type="match status" value="1"/>
</dbReference>
<dbReference type="Pfam" id="PF01116">
    <property type="entry name" value="F_bP_aldolase"/>
    <property type="match status" value="1"/>
</dbReference>
<dbReference type="PIRSF" id="PIRSF001359">
    <property type="entry name" value="F_bP_aldolase_II"/>
    <property type="match status" value="1"/>
</dbReference>
<dbReference type="SUPFAM" id="SSF51569">
    <property type="entry name" value="Aldolase"/>
    <property type="match status" value="1"/>
</dbReference>
<dbReference type="PROSITE" id="PS00602">
    <property type="entry name" value="ALDOLASE_CLASS_II_1"/>
    <property type="match status" value="1"/>
</dbReference>
<dbReference type="PROSITE" id="PS00806">
    <property type="entry name" value="ALDOLASE_CLASS_II_2"/>
    <property type="match status" value="1"/>
</dbReference>
<keyword id="KW-0113">Calvin cycle</keyword>
<keyword id="KW-0324">Glycolysis</keyword>
<keyword id="KW-0456">Lyase</keyword>
<keyword id="KW-0479">Metal-binding</keyword>
<keyword id="KW-0862">Zinc</keyword>
<evidence type="ECO:0000250" key="1"/>
<evidence type="ECO:0000305" key="2"/>
<reference key="1">
    <citation type="journal article" date="1991" name="J. Biol. Chem.">
        <title>Identification, expression, and deduced primary structure of transketolase and other enzymes encoded within the form II CO2 fixation operon of Rhodobacter sphaeroides.</title>
        <authorList>
            <person name="Chen J.-H."/>
            <person name="Gibson J.L."/>
            <person name="McCue L.A."/>
            <person name="Tabita F.R."/>
        </authorList>
    </citation>
    <scope>NUCLEOTIDE SEQUENCE [GENOMIC DNA]</scope>
</reference>
<name>ALF2_CERSP</name>
<gene>
    <name type="primary">cfxB</name>
</gene>
<organism>
    <name type="scientific">Cereibacter sphaeroides</name>
    <name type="common">Rhodobacter sphaeroides</name>
    <dbReference type="NCBI Taxonomy" id="1063"/>
    <lineage>
        <taxon>Bacteria</taxon>
        <taxon>Pseudomonadati</taxon>
        <taxon>Pseudomonadota</taxon>
        <taxon>Alphaproteobacteria</taxon>
        <taxon>Rhodobacterales</taxon>
        <taxon>Paracoccaceae</taxon>
        <taxon>Cereibacter</taxon>
    </lineage>
</organism>
<accession>P29271</accession>
<protein>
    <recommendedName>
        <fullName>Fructose-bisphosphate aldolase 2</fullName>
        <shortName>FBP aldolase</shortName>
        <shortName>FBPA</shortName>
        <ecNumber>4.1.2.13</ecNumber>
    </recommendedName>
    <alternativeName>
        <fullName>Fructose-1,6-bisphosphate aldolase</fullName>
    </alternativeName>
    <alternativeName>
        <fullName>Fructose-bisphosphate aldolase II</fullName>
    </alternativeName>
</protein>
<comment type="function">
    <text evidence="1">Catalyzes the aldol condensation of dihydroxyacetone phosphate (DHAP or glycerone-phosphate) with glyceraldehyde 3-phosphate (G3P) to form fructose 1,6-bisphosphate (FBP) in gluconeogenesis and the reverse reaction in glycolysis.</text>
</comment>
<comment type="catalytic activity">
    <reaction>
        <text>beta-D-fructose 1,6-bisphosphate = D-glyceraldehyde 3-phosphate + dihydroxyacetone phosphate</text>
        <dbReference type="Rhea" id="RHEA:14729"/>
        <dbReference type="ChEBI" id="CHEBI:32966"/>
        <dbReference type="ChEBI" id="CHEBI:57642"/>
        <dbReference type="ChEBI" id="CHEBI:59776"/>
        <dbReference type="EC" id="4.1.2.13"/>
    </reaction>
</comment>
<comment type="cofactor">
    <cofactor evidence="1">
        <name>Zn(2+)</name>
        <dbReference type="ChEBI" id="CHEBI:29105"/>
    </cofactor>
    <text evidence="1">Binds 2 Zn(2+) ions per subunit. One is catalytic and the other provides a structural contribution.</text>
</comment>
<comment type="pathway">
    <text>Carbohydrate biosynthesis; Calvin cycle.</text>
</comment>
<comment type="pathway">
    <text>Carbohydrate degradation; glycolysis; D-glyceraldehyde 3-phosphate and glycerone phosphate from D-glucose: step 4/4.</text>
</comment>
<comment type="subunit">
    <text>Homodimer.</text>
</comment>
<comment type="miscellaneous">
    <text>This protein is encoded within the form II ribulose-bisphosphate carboxylase operon.</text>
</comment>
<comment type="similarity">
    <text evidence="2">Belongs to the class II fructose-bisphosphate aldolase family.</text>
</comment>
<sequence length="354" mass="38269">MALITLRQLLDHAAEQGYGVPAFNINNMEQGLAIMEAARACDAPVIIQASRGARSYANDIMLAKMIEALAAIYPEIPLCMHQDHGNNEATCMTAIRHGFTSVMMDGSLKADAKTPADYDYNVDITARVSHMAHWVGASVEGELGVLGSLETGESEAEDGHGAEGKLDHSQLLTDPDQAVDFVKKTQVDALAIACGTSHGAYKFSRKPDGEILAMSVIEAIHKKLPDTHLVMHGSSSVPQELQDIINAFGGAMPQTFGVPVEEIVRGIKMGVRKVNIDTDCRMAMTGQFRRIAQQTPSEFDPRKFLKPAMDAMRDLCKQRLEAFGTAGQAGKIRIIPMDDMAKRYASGALAPKTA</sequence>
<feature type="chain" id="PRO_0000178733" description="Fructose-bisphosphate aldolase 2">
    <location>
        <begin position="1"/>
        <end position="354"/>
    </location>
</feature>
<feature type="active site" description="Proton donor" evidence="1">
    <location>
        <position position="83"/>
    </location>
</feature>
<feature type="binding site" evidence="1">
    <location>
        <position position="50"/>
    </location>
    <ligand>
        <name>D-glyceraldehyde 3-phosphate</name>
        <dbReference type="ChEBI" id="CHEBI:59776"/>
    </ligand>
</feature>
<feature type="binding site" evidence="1">
    <location>
        <position position="84"/>
    </location>
    <ligand>
        <name>Zn(2+)</name>
        <dbReference type="ChEBI" id="CHEBI:29105"/>
        <label>1</label>
        <note>catalytic</note>
    </ligand>
</feature>
<feature type="binding site" evidence="1">
    <location>
        <position position="105"/>
    </location>
    <ligand>
        <name>Zn(2+)</name>
        <dbReference type="ChEBI" id="CHEBI:29105"/>
        <label>2</label>
    </ligand>
</feature>
<feature type="binding site" evidence="1">
    <location>
        <position position="142"/>
    </location>
    <ligand>
        <name>Zn(2+)</name>
        <dbReference type="ChEBI" id="CHEBI:29105"/>
        <label>2</label>
    </ligand>
</feature>
<feature type="binding site" evidence="1">
    <location>
        <position position="198"/>
    </location>
    <ligand>
        <name>Zn(2+)</name>
        <dbReference type="ChEBI" id="CHEBI:29105"/>
        <label>1</label>
        <note>catalytic</note>
    </ligand>
</feature>
<feature type="binding site" evidence="1">
    <location>
        <position position="199"/>
    </location>
    <ligand>
        <name>dihydroxyacetone phosphate</name>
        <dbReference type="ChEBI" id="CHEBI:57642"/>
    </ligand>
</feature>
<feature type="binding site" evidence="1">
    <location>
        <position position="232"/>
    </location>
    <ligand>
        <name>Zn(2+)</name>
        <dbReference type="ChEBI" id="CHEBI:29105"/>
        <label>1</label>
        <note>catalytic</note>
    </ligand>
</feature>
<feature type="binding site" evidence="1">
    <location>
        <begin position="233"/>
        <end position="235"/>
    </location>
    <ligand>
        <name>dihydroxyacetone phosphate</name>
        <dbReference type="ChEBI" id="CHEBI:57642"/>
    </ligand>
</feature>
<feature type="binding site" evidence="1">
    <location>
        <begin position="275"/>
        <end position="278"/>
    </location>
    <ligand>
        <name>dihydroxyacetone phosphate</name>
        <dbReference type="ChEBI" id="CHEBI:57642"/>
    </ligand>
</feature>
<proteinExistence type="inferred from homology"/>